<comment type="function">
    <text>The primary product of this enzyme is 4,2',4',6'-tetrahydroxychalcone (also termed naringenin-chalcone or chalcone) which can under specific conditions spontaneously isomerize into naringenin.</text>
</comment>
<comment type="catalytic activity">
    <reaction evidence="1">
        <text>(E)-4-coumaroyl-CoA + 3 malonyl-CoA + 3 H(+) = 2',4,4',6'-tetrahydroxychalcone + 3 CO2 + 4 CoA</text>
        <dbReference type="Rhea" id="RHEA:11128"/>
        <dbReference type="ChEBI" id="CHEBI:15378"/>
        <dbReference type="ChEBI" id="CHEBI:15413"/>
        <dbReference type="ChEBI" id="CHEBI:16526"/>
        <dbReference type="ChEBI" id="CHEBI:57287"/>
        <dbReference type="ChEBI" id="CHEBI:57384"/>
        <dbReference type="ChEBI" id="CHEBI:85008"/>
        <dbReference type="EC" id="2.3.1.74"/>
    </reaction>
</comment>
<comment type="pathway">
    <text>Secondary metabolite biosynthesis; flavonoid biosynthesis.</text>
</comment>
<comment type="similarity">
    <text evidence="2">Belongs to the thiolase-like superfamily. Chalcone/stilbene synthases family.</text>
</comment>
<reference key="1">
    <citation type="submission" date="1999-07" db="EMBL/GenBank/DDBJ databases">
        <authorList>
            <person name="Yamazaki Y."/>
            <person name="Sankawa U."/>
        </authorList>
    </citation>
    <scope>NUCLEOTIDE SEQUENCE [MRNA]</scope>
</reference>
<organism>
    <name type="scientific">Equisetum arvense</name>
    <name type="common">Field horsetail</name>
    <name type="synonym">Common horsetail</name>
    <dbReference type="NCBI Taxonomy" id="3258"/>
    <lineage>
        <taxon>Eukaryota</taxon>
        <taxon>Viridiplantae</taxon>
        <taxon>Streptophyta</taxon>
        <taxon>Embryophyta</taxon>
        <taxon>Tracheophyta</taxon>
        <taxon>Polypodiopsida</taxon>
        <taxon>Equisetidae</taxon>
        <taxon>Equisetales</taxon>
        <taxon>Equisetaceae</taxon>
        <taxon>Equisetum</taxon>
    </lineage>
</organism>
<protein>
    <recommendedName>
        <fullName>Chalcone synthase</fullName>
        <ecNumber>2.3.1.74</ecNumber>
    </recommendedName>
    <alternativeName>
        <fullName>Naringenin-chalcone synthase</fullName>
    </alternativeName>
</protein>
<name>CHSY_EQUAR</name>
<keyword id="KW-0002">3D-structure</keyword>
<keyword id="KW-0012">Acyltransferase</keyword>
<keyword id="KW-0284">Flavonoid biosynthesis</keyword>
<keyword id="KW-0808">Transferase</keyword>
<accession>Q9MBB1</accession>
<gene>
    <name type="primary">CHS</name>
</gene>
<evidence type="ECO:0000255" key="1">
    <source>
        <dbReference type="PROSITE-ProRule" id="PRU10023"/>
    </source>
</evidence>
<evidence type="ECO:0000305" key="2"/>
<evidence type="ECO:0007829" key="3">
    <source>
        <dbReference type="PDB" id="6DX9"/>
    </source>
</evidence>
<sequence>MTVLEESADASSRRLAQRANGPATVLAIGTANPANVFEQSSYPDFYFDITNSQHMTELKLKFSRMCQKSGIKKRYMHLNSEILKANPSLCAYWEKSLDVRQDIAVVEVPKLGKEASLKAIKEWGQPKSKITHLVFCTTSGVDMPGADWALTKLLGLRPSVKRLMMYQQGCFAGGTVLRVAKDVAENNKGARVLVVCSEITCVTFRGPSETHLDSLVGQALFGDGAAAVILGSDPLPEENPCFELHWSGSNILPDSDGAIDGHLREVGLTFHLMKDVPGIISKNIGKVLNDAFRSAFDESGNAEDRPASVNDIFWIAHPGGPAILDQVEEKMKLAPEKMRATRDVLSEYGNMSSACVLFIMDHMRRMSAQNKLQTTGEGLDWGVLLGFGPGLTVETVLLKSIRLAC</sequence>
<feature type="chain" id="PRO_0000215975" description="Chalcone synthase">
    <location>
        <begin position="1"/>
        <end position="405"/>
    </location>
</feature>
<feature type="active site" evidence="1">
    <location>
        <position position="170"/>
    </location>
</feature>
<feature type="strand" evidence="3">
    <location>
        <begin position="24"/>
        <end position="31"/>
    </location>
</feature>
<feature type="strand" evidence="3">
    <location>
        <begin position="34"/>
        <end position="38"/>
    </location>
</feature>
<feature type="helix" evidence="3">
    <location>
        <begin position="39"/>
        <end position="41"/>
    </location>
</feature>
<feature type="helix" evidence="3">
    <location>
        <begin position="42"/>
        <end position="49"/>
    </location>
</feature>
<feature type="helix" evidence="3">
    <location>
        <begin position="56"/>
        <end position="67"/>
    </location>
</feature>
<feature type="strand" evidence="3">
    <location>
        <begin position="72"/>
        <end position="77"/>
    </location>
</feature>
<feature type="helix" evidence="3">
    <location>
        <begin position="80"/>
        <end position="85"/>
    </location>
</feature>
<feature type="helix" evidence="3">
    <location>
        <begin position="87"/>
        <end position="89"/>
    </location>
</feature>
<feature type="strand" evidence="3">
    <location>
        <begin position="91"/>
        <end position="93"/>
    </location>
</feature>
<feature type="helix" evidence="3">
    <location>
        <begin position="97"/>
        <end position="123"/>
    </location>
</feature>
<feature type="helix" evidence="3">
    <location>
        <begin position="127"/>
        <end position="129"/>
    </location>
</feature>
<feature type="strand" evidence="3">
    <location>
        <begin position="132"/>
        <end position="139"/>
    </location>
</feature>
<feature type="helix" evidence="3">
    <location>
        <begin position="146"/>
        <end position="154"/>
    </location>
</feature>
<feature type="strand" evidence="3">
    <location>
        <begin position="161"/>
        <end position="167"/>
    </location>
</feature>
<feature type="helix" evidence="3">
    <location>
        <begin position="172"/>
        <end position="185"/>
    </location>
</feature>
<feature type="strand" evidence="3">
    <location>
        <begin position="191"/>
        <end position="198"/>
    </location>
</feature>
<feature type="turn" evidence="3">
    <location>
        <begin position="201"/>
        <end position="203"/>
    </location>
</feature>
<feature type="helix" evidence="3">
    <location>
        <begin position="212"/>
        <end position="220"/>
    </location>
</feature>
<feature type="strand" evidence="3">
    <location>
        <begin position="224"/>
        <end position="233"/>
    </location>
</feature>
<feature type="strand" evidence="3">
    <location>
        <begin position="242"/>
        <end position="251"/>
    </location>
</feature>
<feature type="strand" evidence="3">
    <location>
        <begin position="258"/>
        <end position="264"/>
    </location>
</feature>
<feature type="strand" evidence="3">
    <location>
        <begin position="267"/>
        <end position="271"/>
    </location>
</feature>
<feature type="helix" evidence="3">
    <location>
        <begin position="276"/>
        <end position="295"/>
    </location>
</feature>
<feature type="helix" evidence="3">
    <location>
        <begin position="297"/>
        <end position="299"/>
    </location>
</feature>
<feature type="helix" evidence="3">
    <location>
        <begin position="302"/>
        <end position="304"/>
    </location>
</feature>
<feature type="helix" evidence="3">
    <location>
        <begin position="309"/>
        <end position="311"/>
    </location>
</feature>
<feature type="strand" evidence="3">
    <location>
        <begin position="312"/>
        <end position="316"/>
    </location>
</feature>
<feature type="helix" evidence="3">
    <location>
        <begin position="321"/>
        <end position="331"/>
    </location>
</feature>
<feature type="turn" evidence="3">
    <location>
        <begin position="335"/>
        <end position="338"/>
    </location>
</feature>
<feature type="helix" evidence="3">
    <location>
        <begin position="339"/>
        <end position="348"/>
    </location>
</feature>
<feature type="helix" evidence="3">
    <location>
        <begin position="352"/>
        <end position="354"/>
    </location>
</feature>
<feature type="helix" evidence="3">
    <location>
        <begin position="355"/>
        <end position="369"/>
    </location>
</feature>
<feature type="turn" evidence="3">
    <location>
        <begin position="375"/>
        <end position="378"/>
    </location>
</feature>
<feature type="strand" evidence="3">
    <location>
        <begin position="380"/>
        <end position="388"/>
    </location>
</feature>
<feature type="turn" evidence="3">
    <location>
        <begin position="389"/>
        <end position="391"/>
    </location>
</feature>
<feature type="strand" evidence="3">
    <location>
        <begin position="392"/>
        <end position="400"/>
    </location>
</feature>
<dbReference type="EC" id="2.3.1.74"/>
<dbReference type="EMBL" id="AB030004">
    <property type="protein sequence ID" value="BAA89501.1"/>
    <property type="molecule type" value="mRNA"/>
</dbReference>
<dbReference type="PDB" id="6DX9">
    <property type="method" value="X-ray"/>
    <property type="resolution" value="1.50 A"/>
    <property type="chains" value="A/B=1-405"/>
</dbReference>
<dbReference type="PDBsum" id="6DX9"/>
<dbReference type="SMR" id="Q9MBB1"/>
<dbReference type="UniPathway" id="UPA00154"/>
<dbReference type="GO" id="GO:0016210">
    <property type="term" value="F:naringenin-chalcone synthase activity"/>
    <property type="evidence" value="ECO:0007669"/>
    <property type="project" value="UniProtKB-EC"/>
</dbReference>
<dbReference type="GO" id="GO:0009813">
    <property type="term" value="P:flavonoid biosynthetic process"/>
    <property type="evidence" value="ECO:0007669"/>
    <property type="project" value="UniProtKB-UniPathway"/>
</dbReference>
<dbReference type="GO" id="GO:0030639">
    <property type="term" value="P:polyketide biosynthetic process"/>
    <property type="evidence" value="ECO:0007669"/>
    <property type="project" value="TreeGrafter"/>
</dbReference>
<dbReference type="CDD" id="cd00831">
    <property type="entry name" value="CHS_like"/>
    <property type="match status" value="1"/>
</dbReference>
<dbReference type="FunFam" id="3.40.47.10:FF:000014">
    <property type="entry name" value="Chalcone synthase 1"/>
    <property type="match status" value="1"/>
</dbReference>
<dbReference type="FunFam" id="3.40.47.10:FF:000025">
    <property type="entry name" value="Chalcone synthase 2"/>
    <property type="match status" value="1"/>
</dbReference>
<dbReference type="Gene3D" id="3.40.47.10">
    <property type="match status" value="2"/>
</dbReference>
<dbReference type="InterPro" id="IPR012328">
    <property type="entry name" value="Chalcone/stilbene_synt_C"/>
</dbReference>
<dbReference type="InterPro" id="IPR001099">
    <property type="entry name" value="Chalcone/stilbene_synt_N"/>
</dbReference>
<dbReference type="InterPro" id="IPR018088">
    <property type="entry name" value="Chalcone/stilbene_synthase_AS"/>
</dbReference>
<dbReference type="InterPro" id="IPR011141">
    <property type="entry name" value="Polyketide_synthase_type-III"/>
</dbReference>
<dbReference type="InterPro" id="IPR016039">
    <property type="entry name" value="Thiolase-like"/>
</dbReference>
<dbReference type="PANTHER" id="PTHR11877:SF14">
    <property type="entry name" value="CHALCONE SYNTHASE"/>
    <property type="match status" value="1"/>
</dbReference>
<dbReference type="PANTHER" id="PTHR11877">
    <property type="entry name" value="HYDROXYMETHYLGLUTARYL-COA SYNTHASE"/>
    <property type="match status" value="1"/>
</dbReference>
<dbReference type="Pfam" id="PF02797">
    <property type="entry name" value="Chal_sti_synt_C"/>
    <property type="match status" value="1"/>
</dbReference>
<dbReference type="Pfam" id="PF00195">
    <property type="entry name" value="Chal_sti_synt_N"/>
    <property type="match status" value="1"/>
</dbReference>
<dbReference type="PIRSF" id="PIRSF000451">
    <property type="entry name" value="PKS_III"/>
    <property type="match status" value="1"/>
</dbReference>
<dbReference type="SUPFAM" id="SSF53901">
    <property type="entry name" value="Thiolase-like"/>
    <property type="match status" value="2"/>
</dbReference>
<dbReference type="PROSITE" id="PS00441">
    <property type="entry name" value="CHALCONE_SYNTH"/>
    <property type="match status" value="1"/>
</dbReference>
<proteinExistence type="evidence at protein level"/>